<dbReference type="EMBL" id="AF061267">
    <property type="protein sequence ID" value="AAC71713.1"/>
    <property type="molecule type" value="Genomic_DNA"/>
</dbReference>
<dbReference type="SMR" id="O69062"/>
<dbReference type="TCDB" id="3.A.1.9.4">
    <property type="family name" value="the atp-binding cassette (abc) superfamily"/>
</dbReference>
<dbReference type="GO" id="GO:0005886">
    <property type="term" value="C:plasma membrane"/>
    <property type="evidence" value="ECO:0007669"/>
    <property type="project" value="UniProtKB-SubCell"/>
</dbReference>
<dbReference type="GO" id="GO:0015416">
    <property type="term" value="F:ABC-type phosphonate transporter activity"/>
    <property type="evidence" value="ECO:0007669"/>
    <property type="project" value="InterPro"/>
</dbReference>
<dbReference type="CDD" id="cd06261">
    <property type="entry name" value="TM_PBP2"/>
    <property type="match status" value="1"/>
</dbReference>
<dbReference type="Gene3D" id="1.10.3720.10">
    <property type="entry name" value="MetI-like"/>
    <property type="match status" value="1"/>
</dbReference>
<dbReference type="InterPro" id="IPR000515">
    <property type="entry name" value="MetI-like"/>
</dbReference>
<dbReference type="InterPro" id="IPR035906">
    <property type="entry name" value="MetI-like_sf"/>
</dbReference>
<dbReference type="InterPro" id="IPR005769">
    <property type="entry name" value="PhnE/PtxC"/>
</dbReference>
<dbReference type="NCBIfam" id="TIGR01097">
    <property type="entry name" value="PhnE"/>
    <property type="match status" value="1"/>
</dbReference>
<dbReference type="PANTHER" id="PTHR30043:SF1">
    <property type="entry name" value="ABC TRANSPORT SYSTEM PERMEASE PROTEIN P69"/>
    <property type="match status" value="1"/>
</dbReference>
<dbReference type="PANTHER" id="PTHR30043">
    <property type="entry name" value="PHOSPHONATES TRANSPORT SYSTEM PERMEASE PROTEIN"/>
    <property type="match status" value="1"/>
</dbReference>
<dbReference type="Pfam" id="PF00528">
    <property type="entry name" value="BPD_transp_1"/>
    <property type="match status" value="1"/>
</dbReference>
<dbReference type="SUPFAM" id="SSF161098">
    <property type="entry name" value="MetI-like"/>
    <property type="match status" value="1"/>
</dbReference>
<dbReference type="PROSITE" id="PS50928">
    <property type="entry name" value="ABC_TM1"/>
    <property type="match status" value="1"/>
</dbReference>
<protein>
    <recommendedName>
        <fullName>Putative phosphite transport system permease protein HtxC</fullName>
    </recommendedName>
</protein>
<gene>
    <name type="primary">htxC</name>
</gene>
<sequence>MNQRIEEVMLANVKRDVARRKRHFATSVVVLSLLAVAWYVCQIEFQKLGAGLPRLWSFVVQMFPPDLSDLDVILKGAGETLAMATIGTIFATIIAFPLALMAARNTCPNKWTYRVSRAILNASRGTETFVYALVFVAAVGFGPFSGVLAITFHMVGAIGKMFAEAIEPVDQGPLDALALTGASRAKIIRYGLIPDVMPHLIASVLYIWEFSVRTSTVLGIVGAGGIGQTLKDTVDLLEFNKMITVLAVVLLMVSAIDFISDRLRYLILDTKREGFETLPANN</sequence>
<organism>
    <name type="scientific">Stutzerimonas stutzeri</name>
    <name type="common">Pseudomonas stutzeri</name>
    <dbReference type="NCBI Taxonomy" id="316"/>
    <lineage>
        <taxon>Bacteria</taxon>
        <taxon>Pseudomonadati</taxon>
        <taxon>Pseudomonadota</taxon>
        <taxon>Gammaproteobacteria</taxon>
        <taxon>Pseudomonadales</taxon>
        <taxon>Pseudomonadaceae</taxon>
        <taxon>Stutzerimonas</taxon>
    </lineage>
</organism>
<evidence type="ECO:0000250" key="1"/>
<evidence type="ECO:0000255" key="2">
    <source>
        <dbReference type="PROSITE-ProRule" id="PRU00441"/>
    </source>
</evidence>
<evidence type="ECO:0000305" key="3"/>
<name>HTXC_STUST</name>
<accession>O69062</accession>
<keyword id="KW-0997">Cell inner membrane</keyword>
<keyword id="KW-1003">Cell membrane</keyword>
<keyword id="KW-0472">Membrane</keyword>
<keyword id="KW-0812">Transmembrane</keyword>
<keyword id="KW-1133">Transmembrane helix</keyword>
<keyword id="KW-0813">Transport</keyword>
<reference key="1">
    <citation type="journal article" date="1998" name="J. Bacteriol.">
        <title>Molecular genetic analysis of phosphite and hypophosphite oxidation by Pseudomonas stutzeri WM88.</title>
        <authorList>
            <person name="Metcalf W.W."/>
            <person name="Wolfe R.S."/>
        </authorList>
    </citation>
    <scope>NUCLEOTIDE SEQUENCE [GENOMIC DNA]</scope>
    <source>
        <strain>WM88</strain>
    </source>
</reference>
<feature type="chain" id="PRO_0000060054" description="Putative phosphite transport system permease protein HtxC">
    <location>
        <begin position="1"/>
        <end position="282"/>
    </location>
</feature>
<feature type="transmembrane region" description="Helical" evidence="2">
    <location>
        <begin position="23"/>
        <end position="43"/>
    </location>
</feature>
<feature type="transmembrane region" description="Helical" evidence="2">
    <location>
        <begin position="81"/>
        <end position="101"/>
    </location>
</feature>
<feature type="transmembrane region" description="Helical" evidence="2">
    <location>
        <begin position="130"/>
        <end position="150"/>
    </location>
</feature>
<feature type="transmembrane region" description="Helical" evidence="2">
    <location>
        <begin position="239"/>
        <end position="259"/>
    </location>
</feature>
<feature type="domain" description="ABC transmembrane type-1" evidence="2">
    <location>
        <begin position="77"/>
        <end position="260"/>
    </location>
</feature>
<proteinExistence type="inferred from homology"/>
<comment type="function">
    <text>Probably forms part of a binding-protein-dependent hypophosphite transporter.</text>
</comment>
<comment type="subcellular location">
    <subcellularLocation>
        <location evidence="1">Cell inner membrane</location>
        <topology evidence="2">Multi-pass membrane protein</topology>
    </subcellularLocation>
</comment>
<comment type="similarity">
    <text evidence="3">Belongs to the binding-protein-dependent transport system permease family.</text>
</comment>